<dbReference type="EC" id="7.3.2.1" evidence="1"/>
<dbReference type="EMBL" id="AE014074">
    <property type="protein sequence ID" value="AAM79484.1"/>
    <property type="status" value="ALT_INIT"/>
    <property type="molecule type" value="Genomic_DNA"/>
</dbReference>
<dbReference type="RefSeq" id="WP_002993892.1">
    <property type="nucleotide sequence ID" value="NC_004070.1"/>
</dbReference>
<dbReference type="SMR" id="P0CZ36"/>
<dbReference type="GeneID" id="69900794"/>
<dbReference type="KEGG" id="spg:SpyM3_0877"/>
<dbReference type="HOGENOM" id="CLU_000604_1_22_9"/>
<dbReference type="Proteomes" id="UP000000564">
    <property type="component" value="Chromosome"/>
</dbReference>
<dbReference type="GO" id="GO:0005886">
    <property type="term" value="C:plasma membrane"/>
    <property type="evidence" value="ECO:0007669"/>
    <property type="project" value="UniProtKB-SubCell"/>
</dbReference>
<dbReference type="GO" id="GO:0005524">
    <property type="term" value="F:ATP binding"/>
    <property type="evidence" value="ECO:0007669"/>
    <property type="project" value="UniProtKB-KW"/>
</dbReference>
<dbReference type="GO" id="GO:0016887">
    <property type="term" value="F:ATP hydrolysis activity"/>
    <property type="evidence" value="ECO:0007669"/>
    <property type="project" value="InterPro"/>
</dbReference>
<dbReference type="GO" id="GO:0015415">
    <property type="term" value="F:ATPase-coupled phosphate ion transmembrane transporter activity"/>
    <property type="evidence" value="ECO:0007669"/>
    <property type="project" value="UniProtKB-EC"/>
</dbReference>
<dbReference type="GO" id="GO:0035435">
    <property type="term" value="P:phosphate ion transmembrane transport"/>
    <property type="evidence" value="ECO:0007669"/>
    <property type="project" value="InterPro"/>
</dbReference>
<dbReference type="CDD" id="cd03260">
    <property type="entry name" value="ABC_PstB_phosphate_transporter"/>
    <property type="match status" value="1"/>
</dbReference>
<dbReference type="Gene3D" id="3.40.50.300">
    <property type="entry name" value="P-loop containing nucleotide triphosphate hydrolases"/>
    <property type="match status" value="1"/>
</dbReference>
<dbReference type="InterPro" id="IPR003593">
    <property type="entry name" value="AAA+_ATPase"/>
</dbReference>
<dbReference type="InterPro" id="IPR003439">
    <property type="entry name" value="ABC_transporter-like_ATP-bd"/>
</dbReference>
<dbReference type="InterPro" id="IPR017871">
    <property type="entry name" value="ABC_transporter-like_CS"/>
</dbReference>
<dbReference type="InterPro" id="IPR027417">
    <property type="entry name" value="P-loop_NTPase"/>
</dbReference>
<dbReference type="InterPro" id="IPR005670">
    <property type="entry name" value="PstB-like"/>
</dbReference>
<dbReference type="NCBIfam" id="TIGR00972">
    <property type="entry name" value="3a0107s01c2"/>
    <property type="match status" value="1"/>
</dbReference>
<dbReference type="PANTHER" id="PTHR43423">
    <property type="entry name" value="ABC TRANSPORTER I FAMILY MEMBER 17"/>
    <property type="match status" value="1"/>
</dbReference>
<dbReference type="PANTHER" id="PTHR43423:SF1">
    <property type="entry name" value="ABC TRANSPORTER I FAMILY MEMBER 17"/>
    <property type="match status" value="1"/>
</dbReference>
<dbReference type="Pfam" id="PF00005">
    <property type="entry name" value="ABC_tran"/>
    <property type="match status" value="1"/>
</dbReference>
<dbReference type="SMART" id="SM00382">
    <property type="entry name" value="AAA"/>
    <property type="match status" value="1"/>
</dbReference>
<dbReference type="SUPFAM" id="SSF52540">
    <property type="entry name" value="P-loop containing nucleoside triphosphate hydrolases"/>
    <property type="match status" value="1"/>
</dbReference>
<dbReference type="PROSITE" id="PS00211">
    <property type="entry name" value="ABC_TRANSPORTER_1"/>
    <property type="match status" value="1"/>
</dbReference>
<dbReference type="PROSITE" id="PS50893">
    <property type="entry name" value="ABC_TRANSPORTER_2"/>
    <property type="match status" value="1"/>
</dbReference>
<dbReference type="PROSITE" id="PS51238">
    <property type="entry name" value="PSTB"/>
    <property type="match status" value="1"/>
</dbReference>
<reference key="1">
    <citation type="journal article" date="2002" name="Proc. Natl. Acad. Sci. U.S.A.">
        <title>Genome sequence of a serotype M3 strain of group A Streptococcus: phage-encoded toxins, the high-virulence phenotype, and clone emergence.</title>
        <authorList>
            <person name="Beres S.B."/>
            <person name="Sylva G.L."/>
            <person name="Barbian K.D."/>
            <person name="Lei B."/>
            <person name="Hoff J.S."/>
            <person name="Mammarella N.D."/>
            <person name="Liu M.-Y."/>
            <person name="Smoot J.C."/>
            <person name="Porcella S.F."/>
            <person name="Parkins L.D."/>
            <person name="Campbell D.S."/>
            <person name="Smith T.M."/>
            <person name="McCormick J.K."/>
            <person name="Leung D.Y.M."/>
            <person name="Schlievert P.M."/>
            <person name="Musser J.M."/>
        </authorList>
    </citation>
    <scope>NUCLEOTIDE SEQUENCE [LARGE SCALE GENOMIC DNA]</scope>
    <source>
        <strain>ATCC BAA-595 / MGAS315</strain>
    </source>
</reference>
<accession>P0CZ36</accession>
<accession>P63376</accession>
<accession>Q8P0V4</accession>
<accession>Q99ZG5</accession>
<comment type="function">
    <text evidence="1">Part of the ABC transporter complex PstSACB involved in phosphate import. Responsible for energy coupling to the transport system.</text>
</comment>
<comment type="catalytic activity">
    <reaction evidence="1">
        <text>phosphate(out) + ATP + H2O = ADP + 2 phosphate(in) + H(+)</text>
        <dbReference type="Rhea" id="RHEA:24440"/>
        <dbReference type="ChEBI" id="CHEBI:15377"/>
        <dbReference type="ChEBI" id="CHEBI:15378"/>
        <dbReference type="ChEBI" id="CHEBI:30616"/>
        <dbReference type="ChEBI" id="CHEBI:43474"/>
        <dbReference type="ChEBI" id="CHEBI:456216"/>
        <dbReference type="EC" id="7.3.2.1"/>
    </reaction>
</comment>
<comment type="subunit">
    <text evidence="1">The complex is composed of two ATP-binding proteins (PstB), two transmembrane proteins (PstC and PstA) and a solute-binding protein (PstS).</text>
</comment>
<comment type="subcellular location">
    <subcellularLocation>
        <location evidence="1">Cell membrane</location>
        <topology evidence="1">Peripheral membrane protein</topology>
    </subcellularLocation>
</comment>
<comment type="similarity">
    <text evidence="1">Belongs to the ABC transporter superfamily. Phosphate importer (TC 3.A.1.7) family.</text>
</comment>
<comment type="sequence caution" evidence="2">
    <conflict type="erroneous initiation">
        <sequence resource="EMBL-CDS" id="AAM79484"/>
    </conflict>
</comment>
<gene>
    <name evidence="1" type="primary">pstB1</name>
    <name type="synonym">pstB</name>
    <name type="ordered locus">SpyM3_0877</name>
</gene>
<name>PSTB1_STRP3</name>
<keyword id="KW-0067">ATP-binding</keyword>
<keyword id="KW-1003">Cell membrane</keyword>
<keyword id="KW-0472">Membrane</keyword>
<keyword id="KW-0547">Nucleotide-binding</keyword>
<keyword id="KW-0592">Phosphate transport</keyword>
<keyword id="KW-1278">Translocase</keyword>
<keyword id="KW-0813">Transport</keyword>
<proteinExistence type="inferred from homology"/>
<protein>
    <recommendedName>
        <fullName evidence="1">Phosphate import ATP-binding protein PstB 1</fullName>
        <ecNumber evidence="1">7.3.2.1</ecNumber>
    </recommendedName>
    <alternativeName>
        <fullName evidence="1">ABC phosphate transporter 1</fullName>
    </alternativeName>
    <alternativeName>
        <fullName evidence="1">Phosphate-transporting ATPase 1</fullName>
    </alternativeName>
</protein>
<organism>
    <name type="scientific">Streptococcus pyogenes serotype M3 (strain ATCC BAA-595 / MGAS315)</name>
    <dbReference type="NCBI Taxonomy" id="198466"/>
    <lineage>
        <taxon>Bacteria</taxon>
        <taxon>Bacillati</taxon>
        <taxon>Bacillota</taxon>
        <taxon>Bacilli</taxon>
        <taxon>Lactobacillales</taxon>
        <taxon>Streptococcaceae</taxon>
        <taxon>Streptococcus</taxon>
    </lineage>
</organism>
<evidence type="ECO:0000255" key="1">
    <source>
        <dbReference type="HAMAP-Rule" id="MF_01702"/>
    </source>
</evidence>
<evidence type="ECO:0000305" key="2"/>
<feature type="chain" id="PRO_0000092905" description="Phosphate import ATP-binding protein PstB 1">
    <location>
        <begin position="1"/>
        <end position="252"/>
    </location>
</feature>
<feature type="domain" description="ABC transporter" evidence="1">
    <location>
        <begin position="6"/>
        <end position="247"/>
    </location>
</feature>
<feature type="binding site" evidence="1">
    <location>
        <begin position="38"/>
        <end position="45"/>
    </location>
    <ligand>
        <name>ATP</name>
        <dbReference type="ChEBI" id="CHEBI:30616"/>
    </ligand>
</feature>
<sequence length="252" mass="28080">MTEPILQIRDLSVYYNQKKTLKDVSLDLYPNEITALIGPSGSGKSTLLRSINRMNDLNPEVTITGSIVYNGHNIYSPRTDTVDLRKEIGMVFQQPNPFPMSIYENVVYGLRLKGIRDKSILDHAVESSLKGASIWNEVKDRLHDSAVGLSGGQQQRVCIARVLATSPRIILLDEPTSALDPISAGKIEETLLLLKKDYTLAIVTRSMQQASRLSDRTGFFLEGDLLECGPTKAMFMNPKRKETEDYISGKFG</sequence>